<evidence type="ECO:0000269" key="1">
    <source>
    </source>
</evidence>
<evidence type="ECO:0000303" key="2">
    <source>
    </source>
</evidence>
<evidence type="ECO:0000305" key="3"/>
<evidence type="ECO:0000305" key="4">
    <source>
    </source>
</evidence>
<organism>
    <name type="scientific">Tityus serrulatus</name>
    <name type="common">Brazilian scorpion</name>
    <dbReference type="NCBI Taxonomy" id="6887"/>
    <lineage>
        <taxon>Eukaryota</taxon>
        <taxon>Metazoa</taxon>
        <taxon>Ecdysozoa</taxon>
        <taxon>Arthropoda</taxon>
        <taxon>Chelicerata</taxon>
        <taxon>Arachnida</taxon>
        <taxon>Scorpiones</taxon>
        <taxon>Buthida</taxon>
        <taxon>Buthoidea</taxon>
        <taxon>Buthidae</taxon>
        <taxon>Tityus</taxon>
    </lineage>
</organism>
<dbReference type="GO" id="GO:0005576">
    <property type="term" value="C:extracellular region"/>
    <property type="evidence" value="ECO:0007669"/>
    <property type="project" value="UniProtKB-SubCell"/>
</dbReference>
<dbReference type="GO" id="GO:0031640">
    <property type="term" value="P:killing of cells of another organism"/>
    <property type="evidence" value="ECO:0007669"/>
    <property type="project" value="UniProtKB-KW"/>
</dbReference>
<sequence length="10" mass="1075">DEGPKSDCKP</sequence>
<proteinExistence type="evidence at protein level"/>
<comment type="function">
    <text evidence="1">Causes weak hemolysis. Does not cause mast cell degranulation, LDH release and does not have antimicrobial activity. In vivo, causes intense edema formation and intense pain, when injected in mice hind paws. It also induces discomfort and anxiety in mice, as it highly increases rearing behavior (but has no effect on locomotion).</text>
</comment>
<comment type="subcellular location">
    <subcellularLocation>
        <location evidence="1">Secreted</location>
    </subcellularLocation>
</comment>
<comment type="tissue specificity">
    <text evidence="4">Expressed by the venom gland.</text>
</comment>
<comment type="mass spectrometry" mass="1075.57" method="Electrospray" evidence="1"/>
<comment type="miscellaneous">
    <text evidence="3">The primary structure of the mature peptide is identical to that of cryptide To27 from Tityus obscurus (AC P84676).</text>
</comment>
<feature type="peptide" id="PRO_0000461730" description="Cryptide TyPep-5" evidence="1">
    <location>
        <begin position="1"/>
        <end position="10"/>
    </location>
</feature>
<keyword id="KW-0204">Cytolysis</keyword>
<keyword id="KW-0903">Direct protein sequencing</keyword>
<keyword id="KW-0964">Secreted</keyword>
<accession>P0DRE0</accession>
<name>CRY5_TITSE</name>
<reference key="1">
    <citation type="journal article" date="2024" name="J. Nat. Prod.">
        <title>Profiling the linear peptides of venom from the Brazilian scorpion Tityus serrulatus: structural and functional characterization.</title>
        <authorList>
            <person name="Dias N.B."/>
            <person name="de Souza B.M."/>
            <person name="Cid-Alda F."/>
            <person name="Dorce V.A.C."/>
            <person name="Cocchi F.K."/>
            <person name="Palma M.S."/>
        </authorList>
    </citation>
    <scope>PROTEIN SEQUENCE</scope>
    <scope>IDENTIFICATION BY MASS SPECTROMETRY</scope>
    <scope>MASS SPECTROMETRY</scope>
    <scope>SUBCELLULAR LOCATION</scope>
    <scope>SYNTHESIS</scope>
    <scope>FUNCTION</scope>
    <scope>BIOASSAY</scope>
    <source>
        <tissue>Venom</tissue>
    </source>
</reference>
<protein>
    <recommendedName>
        <fullName evidence="2">Cryptide TyPep-5</fullName>
    </recommendedName>
</protein>